<keyword id="KW-1185">Reference proteome</keyword>
<keyword id="KW-0678">Repressor</keyword>
<keyword id="KW-0687">Ribonucleoprotein</keyword>
<keyword id="KW-0689">Ribosomal protein</keyword>
<keyword id="KW-0694">RNA-binding</keyword>
<keyword id="KW-0699">rRNA-binding</keyword>
<keyword id="KW-0810">Translation regulation</keyword>
<keyword id="KW-0820">tRNA-binding</keyword>
<protein>
    <recommendedName>
        <fullName evidence="1">Large ribosomal subunit protein uL1</fullName>
    </recommendedName>
    <alternativeName>
        <fullName evidence="2">50S ribosomal protein L1</fullName>
    </alternativeName>
</protein>
<dbReference type="EMBL" id="CP000133">
    <property type="protein sequence ID" value="ABC90459.1"/>
    <property type="molecule type" value="Genomic_DNA"/>
</dbReference>
<dbReference type="RefSeq" id="WP_011424973.1">
    <property type="nucleotide sequence ID" value="NC_007761.1"/>
</dbReference>
<dbReference type="SMR" id="Q2K9M7"/>
<dbReference type="KEGG" id="ret:RHE_CH01664"/>
<dbReference type="eggNOG" id="COG0081">
    <property type="taxonomic scope" value="Bacteria"/>
</dbReference>
<dbReference type="HOGENOM" id="CLU_062853_0_0_5"/>
<dbReference type="OrthoDB" id="9803740at2"/>
<dbReference type="Proteomes" id="UP000001936">
    <property type="component" value="Chromosome"/>
</dbReference>
<dbReference type="GO" id="GO:0022625">
    <property type="term" value="C:cytosolic large ribosomal subunit"/>
    <property type="evidence" value="ECO:0007669"/>
    <property type="project" value="TreeGrafter"/>
</dbReference>
<dbReference type="GO" id="GO:0019843">
    <property type="term" value="F:rRNA binding"/>
    <property type="evidence" value="ECO:0007669"/>
    <property type="project" value="UniProtKB-UniRule"/>
</dbReference>
<dbReference type="GO" id="GO:0003735">
    <property type="term" value="F:structural constituent of ribosome"/>
    <property type="evidence" value="ECO:0007669"/>
    <property type="project" value="InterPro"/>
</dbReference>
<dbReference type="GO" id="GO:0000049">
    <property type="term" value="F:tRNA binding"/>
    <property type="evidence" value="ECO:0007669"/>
    <property type="project" value="UniProtKB-KW"/>
</dbReference>
<dbReference type="GO" id="GO:0006417">
    <property type="term" value="P:regulation of translation"/>
    <property type="evidence" value="ECO:0007669"/>
    <property type="project" value="UniProtKB-KW"/>
</dbReference>
<dbReference type="GO" id="GO:0006412">
    <property type="term" value="P:translation"/>
    <property type="evidence" value="ECO:0007669"/>
    <property type="project" value="UniProtKB-UniRule"/>
</dbReference>
<dbReference type="CDD" id="cd00403">
    <property type="entry name" value="Ribosomal_L1"/>
    <property type="match status" value="1"/>
</dbReference>
<dbReference type="FunFam" id="3.40.50.790:FF:000001">
    <property type="entry name" value="50S ribosomal protein L1"/>
    <property type="match status" value="1"/>
</dbReference>
<dbReference type="Gene3D" id="3.30.190.20">
    <property type="match status" value="1"/>
</dbReference>
<dbReference type="Gene3D" id="3.40.50.790">
    <property type="match status" value="1"/>
</dbReference>
<dbReference type="HAMAP" id="MF_01318_B">
    <property type="entry name" value="Ribosomal_uL1_B"/>
    <property type="match status" value="1"/>
</dbReference>
<dbReference type="InterPro" id="IPR005878">
    <property type="entry name" value="Ribosom_uL1_bac-type"/>
</dbReference>
<dbReference type="InterPro" id="IPR002143">
    <property type="entry name" value="Ribosomal_uL1"/>
</dbReference>
<dbReference type="InterPro" id="IPR023674">
    <property type="entry name" value="Ribosomal_uL1-like"/>
</dbReference>
<dbReference type="InterPro" id="IPR028364">
    <property type="entry name" value="Ribosomal_uL1/biogenesis"/>
</dbReference>
<dbReference type="InterPro" id="IPR016095">
    <property type="entry name" value="Ribosomal_uL1_3-a/b-sand"/>
</dbReference>
<dbReference type="InterPro" id="IPR023673">
    <property type="entry name" value="Ribosomal_uL1_CS"/>
</dbReference>
<dbReference type="NCBIfam" id="TIGR01169">
    <property type="entry name" value="rplA_bact"/>
    <property type="match status" value="1"/>
</dbReference>
<dbReference type="PANTHER" id="PTHR36427">
    <property type="entry name" value="54S RIBOSOMAL PROTEIN L1, MITOCHONDRIAL"/>
    <property type="match status" value="1"/>
</dbReference>
<dbReference type="PANTHER" id="PTHR36427:SF3">
    <property type="entry name" value="LARGE RIBOSOMAL SUBUNIT PROTEIN UL1M"/>
    <property type="match status" value="1"/>
</dbReference>
<dbReference type="Pfam" id="PF00687">
    <property type="entry name" value="Ribosomal_L1"/>
    <property type="match status" value="1"/>
</dbReference>
<dbReference type="PIRSF" id="PIRSF002155">
    <property type="entry name" value="Ribosomal_L1"/>
    <property type="match status" value="1"/>
</dbReference>
<dbReference type="SUPFAM" id="SSF56808">
    <property type="entry name" value="Ribosomal protein L1"/>
    <property type="match status" value="1"/>
</dbReference>
<dbReference type="PROSITE" id="PS01199">
    <property type="entry name" value="RIBOSOMAL_L1"/>
    <property type="match status" value="1"/>
</dbReference>
<organism>
    <name type="scientific">Rhizobium etli (strain ATCC 51251 / DSM 11541 / JCM 21823 / NBRC 15573 / CFN 42)</name>
    <dbReference type="NCBI Taxonomy" id="347834"/>
    <lineage>
        <taxon>Bacteria</taxon>
        <taxon>Pseudomonadati</taxon>
        <taxon>Pseudomonadota</taxon>
        <taxon>Alphaproteobacteria</taxon>
        <taxon>Hyphomicrobiales</taxon>
        <taxon>Rhizobiaceae</taxon>
        <taxon>Rhizobium/Agrobacterium group</taxon>
        <taxon>Rhizobium</taxon>
    </lineage>
</organism>
<name>RL1_RHIEC</name>
<proteinExistence type="inferred from homology"/>
<feature type="chain" id="PRO_0000308083" description="Large ribosomal subunit protein uL1">
    <location>
        <begin position="1"/>
        <end position="233"/>
    </location>
</feature>
<gene>
    <name evidence="1" type="primary">rplA</name>
    <name type="ordered locus">RHE_CH01664</name>
</gene>
<sequence>MAGKRTRKINEGVDPTKLYALTTAIGMVKERAVAKFDETIEVSMNLGVDPRHADQMVRGVVNLPNGTGRTVRVAVFARGAKADEAKAAGADVVGAEDLVEIVQGGKIEFDRCIATPDMMPLVGRLGKVLGPRGMMPNPKVGTVTMDVAGAVKASKGGAVEFRVEKAGIVHAGIGKASFDAKALEENIRAFADAVIKAKPAGAKGNYVKRVAISSTMGPGVKIEVGSVTAAPTA</sequence>
<accession>Q2K9M7</accession>
<reference key="1">
    <citation type="journal article" date="2006" name="Proc. Natl. Acad. Sci. U.S.A.">
        <title>The partitioned Rhizobium etli genome: genetic and metabolic redundancy in seven interacting replicons.</title>
        <authorList>
            <person name="Gonzalez V."/>
            <person name="Santamaria R.I."/>
            <person name="Bustos P."/>
            <person name="Hernandez-Gonzalez I."/>
            <person name="Medrano-Soto A."/>
            <person name="Moreno-Hagelsieb G."/>
            <person name="Janga S.C."/>
            <person name="Ramirez M.A."/>
            <person name="Jimenez-Jacinto V."/>
            <person name="Collado-Vides J."/>
            <person name="Davila G."/>
        </authorList>
    </citation>
    <scope>NUCLEOTIDE SEQUENCE [LARGE SCALE GENOMIC DNA]</scope>
    <source>
        <strain>ATCC 51251 / DSM 11541 / JCM 21823 / NBRC 15573 / CFN 42</strain>
    </source>
</reference>
<evidence type="ECO:0000255" key="1">
    <source>
        <dbReference type="HAMAP-Rule" id="MF_01318"/>
    </source>
</evidence>
<evidence type="ECO:0000305" key="2"/>
<comment type="function">
    <text evidence="1">Binds directly to 23S rRNA. The L1 stalk is quite mobile in the ribosome, and is involved in E site tRNA release.</text>
</comment>
<comment type="function">
    <text evidence="1">Protein L1 is also a translational repressor protein, it controls the translation of the L11 operon by binding to its mRNA.</text>
</comment>
<comment type="subunit">
    <text evidence="1">Part of the 50S ribosomal subunit.</text>
</comment>
<comment type="similarity">
    <text evidence="1">Belongs to the universal ribosomal protein uL1 family.</text>
</comment>